<dbReference type="EMBL" id="CP001138">
    <property type="protein sequence ID" value="ACH48494.1"/>
    <property type="molecule type" value="Genomic_DNA"/>
</dbReference>
<dbReference type="RefSeq" id="WP_001519453.1">
    <property type="nucleotide sequence ID" value="NC_011149.1"/>
</dbReference>
<dbReference type="SMR" id="B5F3B8"/>
<dbReference type="GeneID" id="66758616"/>
<dbReference type="KEGG" id="sea:SeAg_B4670"/>
<dbReference type="HOGENOM" id="CLU_166075_0_0_6"/>
<dbReference type="Proteomes" id="UP000008819">
    <property type="component" value="Chromosome"/>
</dbReference>
<dbReference type="GO" id="GO:1990077">
    <property type="term" value="C:primosome complex"/>
    <property type="evidence" value="ECO:0007669"/>
    <property type="project" value="UniProtKB-KW"/>
</dbReference>
<dbReference type="GO" id="GO:0003697">
    <property type="term" value="F:single-stranded DNA binding"/>
    <property type="evidence" value="ECO:0007669"/>
    <property type="project" value="UniProtKB-UniRule"/>
</dbReference>
<dbReference type="GO" id="GO:0006269">
    <property type="term" value="P:DNA replication, synthesis of primer"/>
    <property type="evidence" value="ECO:0007669"/>
    <property type="project" value="UniProtKB-KW"/>
</dbReference>
<dbReference type="CDD" id="cd04496">
    <property type="entry name" value="SSB_OBF"/>
    <property type="match status" value="1"/>
</dbReference>
<dbReference type="FunFam" id="2.40.50.140:FF:000077">
    <property type="entry name" value="Primosomal replication protein N"/>
    <property type="match status" value="1"/>
</dbReference>
<dbReference type="Gene3D" id="2.40.50.140">
    <property type="entry name" value="Nucleic acid-binding proteins"/>
    <property type="match status" value="1"/>
</dbReference>
<dbReference type="HAMAP" id="MF_00720">
    <property type="entry name" value="PriB"/>
    <property type="match status" value="1"/>
</dbReference>
<dbReference type="InterPro" id="IPR012340">
    <property type="entry name" value="NA-bd_OB-fold"/>
</dbReference>
<dbReference type="InterPro" id="IPR000424">
    <property type="entry name" value="Primosome_PriB/ssb"/>
</dbReference>
<dbReference type="InterPro" id="IPR023646">
    <property type="entry name" value="Prisomal_replication_PriB"/>
</dbReference>
<dbReference type="NCBIfam" id="TIGR04418">
    <property type="entry name" value="PriB_gamma"/>
    <property type="match status" value="1"/>
</dbReference>
<dbReference type="Pfam" id="PF22657">
    <property type="entry name" value="SSB_1"/>
    <property type="match status" value="1"/>
</dbReference>
<dbReference type="PIRSF" id="PIRSF003135">
    <property type="entry name" value="Primosomal_n"/>
    <property type="match status" value="1"/>
</dbReference>
<dbReference type="SUPFAM" id="SSF50249">
    <property type="entry name" value="Nucleic acid-binding proteins"/>
    <property type="match status" value="1"/>
</dbReference>
<dbReference type="PROSITE" id="PS50935">
    <property type="entry name" value="SSB"/>
    <property type="match status" value="1"/>
</dbReference>
<sequence length="104" mass="11414">MTNRLALSGTVCRAPLRKVSPSGIPHCQFVLEHRSVQEEAGFHRQAWCQMPVIVSGHENQAITHSITVGSRITVQGFISCHKAKNGLSKMVLHAEQIELIDSGD</sequence>
<gene>
    <name evidence="1" type="primary">priB</name>
    <name type="ordered locus">SeAg_B4670</name>
</gene>
<proteinExistence type="inferred from homology"/>
<accession>B5F3B8</accession>
<reference key="1">
    <citation type="journal article" date="2011" name="J. Bacteriol.">
        <title>Comparative genomics of 28 Salmonella enterica isolates: evidence for CRISPR-mediated adaptive sublineage evolution.</title>
        <authorList>
            <person name="Fricke W.F."/>
            <person name="Mammel M.K."/>
            <person name="McDermott P.F."/>
            <person name="Tartera C."/>
            <person name="White D.G."/>
            <person name="Leclerc J.E."/>
            <person name="Ravel J."/>
            <person name="Cebula T.A."/>
        </authorList>
    </citation>
    <scope>NUCLEOTIDE SEQUENCE [LARGE SCALE GENOMIC DNA]</scope>
    <source>
        <strain>SL483</strain>
    </source>
</reference>
<protein>
    <recommendedName>
        <fullName evidence="1">Replication restart protein PriB</fullName>
    </recommendedName>
</protein>
<evidence type="ECO:0000255" key="1">
    <source>
        <dbReference type="HAMAP-Rule" id="MF_00720"/>
    </source>
</evidence>
<name>PRIB_SALA4</name>
<keyword id="KW-0235">DNA replication</keyword>
<keyword id="KW-0238">DNA-binding</keyword>
<keyword id="KW-0639">Primosome</keyword>
<comment type="function">
    <text evidence="1">Involved in the restart of stalled replication forks, which reloads the replicative helicase on sites other than the origin of replication; the PriA-PriB pathway is the major replication restart pathway. During primosome assembly it facilitates complex formation between PriA and DnaT on DNA; stabilizes PriA on DNA. Stimulates the DNA unwinding activity of PriA helicase.</text>
</comment>
<comment type="subunit">
    <text evidence="1">Homodimer. Interacts with PriA and DnaT. Component of the replication restart primosome. Primosome assembly occurs via a 'hand-off' mechanism. PriA binds to replication forks, subsequently PriB then DnaT bind; DnaT then displaces ssDNA to generate the helicase loading substrate.</text>
</comment>
<comment type="similarity">
    <text evidence="1">Belongs to the PriB family.</text>
</comment>
<organism>
    <name type="scientific">Salmonella agona (strain SL483)</name>
    <dbReference type="NCBI Taxonomy" id="454166"/>
    <lineage>
        <taxon>Bacteria</taxon>
        <taxon>Pseudomonadati</taxon>
        <taxon>Pseudomonadota</taxon>
        <taxon>Gammaproteobacteria</taxon>
        <taxon>Enterobacterales</taxon>
        <taxon>Enterobacteriaceae</taxon>
        <taxon>Salmonella</taxon>
    </lineage>
</organism>
<feature type="chain" id="PRO_1000132626" description="Replication restart protein PriB">
    <location>
        <begin position="1"/>
        <end position="104"/>
    </location>
</feature>
<feature type="domain" description="SSB" evidence="1">
    <location>
        <begin position="1"/>
        <end position="101"/>
    </location>
</feature>